<evidence type="ECO:0000255" key="1">
    <source>
        <dbReference type="HAMAP-Rule" id="MF_00145"/>
    </source>
</evidence>
<gene>
    <name evidence="1" type="primary">pgk</name>
    <name type="ordered locus">PFL_5784</name>
</gene>
<protein>
    <recommendedName>
        <fullName evidence="1">Phosphoglycerate kinase</fullName>
        <ecNumber evidence="1">2.7.2.3</ecNumber>
    </recommendedName>
</protein>
<proteinExistence type="inferred from homology"/>
<organism>
    <name type="scientific">Pseudomonas fluorescens (strain ATCC BAA-477 / NRRL B-23932 / Pf-5)</name>
    <dbReference type="NCBI Taxonomy" id="220664"/>
    <lineage>
        <taxon>Bacteria</taxon>
        <taxon>Pseudomonadati</taxon>
        <taxon>Pseudomonadota</taxon>
        <taxon>Gammaproteobacteria</taxon>
        <taxon>Pseudomonadales</taxon>
        <taxon>Pseudomonadaceae</taxon>
        <taxon>Pseudomonas</taxon>
    </lineage>
</organism>
<name>PGK_PSEF5</name>
<reference key="1">
    <citation type="journal article" date="2005" name="Nat. Biotechnol.">
        <title>Complete genome sequence of the plant commensal Pseudomonas fluorescens Pf-5.</title>
        <authorList>
            <person name="Paulsen I.T."/>
            <person name="Press C.M."/>
            <person name="Ravel J."/>
            <person name="Kobayashi D.Y."/>
            <person name="Myers G.S.A."/>
            <person name="Mavrodi D.V."/>
            <person name="DeBoy R.T."/>
            <person name="Seshadri R."/>
            <person name="Ren Q."/>
            <person name="Madupu R."/>
            <person name="Dodson R.J."/>
            <person name="Durkin A.S."/>
            <person name="Brinkac L.M."/>
            <person name="Daugherty S.C."/>
            <person name="Sullivan S.A."/>
            <person name="Rosovitz M.J."/>
            <person name="Gwinn M.L."/>
            <person name="Zhou L."/>
            <person name="Schneider D.J."/>
            <person name="Cartinhour S.W."/>
            <person name="Nelson W.C."/>
            <person name="Weidman J."/>
            <person name="Watkins K."/>
            <person name="Tran K."/>
            <person name="Khouri H."/>
            <person name="Pierson E.A."/>
            <person name="Pierson L.S. III"/>
            <person name="Thomashow L.S."/>
            <person name="Loper J.E."/>
        </authorList>
    </citation>
    <scope>NUCLEOTIDE SEQUENCE [LARGE SCALE GENOMIC DNA]</scope>
    <source>
        <strain>ATCC BAA-477 / NRRL B-23932 / Pf-5</strain>
    </source>
</reference>
<feature type="chain" id="PRO_1000058038" description="Phosphoglycerate kinase">
    <location>
        <begin position="1"/>
        <end position="387"/>
    </location>
</feature>
<feature type="binding site" evidence="1">
    <location>
        <begin position="21"/>
        <end position="23"/>
    </location>
    <ligand>
        <name>substrate</name>
    </ligand>
</feature>
<feature type="binding site" evidence="1">
    <location>
        <position position="36"/>
    </location>
    <ligand>
        <name>substrate</name>
    </ligand>
</feature>
<feature type="binding site" evidence="1">
    <location>
        <begin position="59"/>
        <end position="62"/>
    </location>
    <ligand>
        <name>substrate</name>
    </ligand>
</feature>
<feature type="binding site" evidence="1">
    <location>
        <position position="113"/>
    </location>
    <ligand>
        <name>substrate</name>
    </ligand>
</feature>
<feature type="binding site" evidence="1">
    <location>
        <position position="146"/>
    </location>
    <ligand>
        <name>substrate</name>
    </ligand>
</feature>
<feature type="binding site" evidence="1">
    <location>
        <position position="197"/>
    </location>
    <ligand>
        <name>ATP</name>
        <dbReference type="ChEBI" id="CHEBI:30616"/>
    </ligand>
</feature>
<feature type="binding site" evidence="1">
    <location>
        <position position="314"/>
    </location>
    <ligand>
        <name>ATP</name>
        <dbReference type="ChEBI" id="CHEBI:30616"/>
    </ligand>
</feature>
<feature type="binding site" evidence="1">
    <location>
        <begin position="340"/>
        <end position="343"/>
    </location>
    <ligand>
        <name>ATP</name>
        <dbReference type="ChEBI" id="CHEBI:30616"/>
    </ligand>
</feature>
<keyword id="KW-0067">ATP-binding</keyword>
<keyword id="KW-0963">Cytoplasm</keyword>
<keyword id="KW-0324">Glycolysis</keyword>
<keyword id="KW-0418">Kinase</keyword>
<keyword id="KW-0547">Nucleotide-binding</keyword>
<keyword id="KW-0808">Transferase</keyword>
<comment type="catalytic activity">
    <reaction evidence="1">
        <text>(2R)-3-phosphoglycerate + ATP = (2R)-3-phospho-glyceroyl phosphate + ADP</text>
        <dbReference type="Rhea" id="RHEA:14801"/>
        <dbReference type="ChEBI" id="CHEBI:30616"/>
        <dbReference type="ChEBI" id="CHEBI:57604"/>
        <dbReference type="ChEBI" id="CHEBI:58272"/>
        <dbReference type="ChEBI" id="CHEBI:456216"/>
        <dbReference type="EC" id="2.7.2.3"/>
    </reaction>
</comment>
<comment type="pathway">
    <text evidence="1">Carbohydrate degradation; glycolysis; pyruvate from D-glyceraldehyde 3-phosphate: step 2/5.</text>
</comment>
<comment type="subunit">
    <text evidence="1">Monomer.</text>
</comment>
<comment type="subcellular location">
    <subcellularLocation>
        <location evidence="1">Cytoplasm</location>
    </subcellularLocation>
</comment>
<comment type="similarity">
    <text evidence="1">Belongs to the phosphoglycerate kinase family.</text>
</comment>
<sequence>MTVLKMTDLDLQGKRVLIREDLNVPVKDGVVTSDARILASLPTIKLALEKGAAVMVCSHLGRPTEGEFSAENSLKPVADYLSRALGREVPLVADYLGGVEVKAGDIVLFENVRFNKGEKKNADELAQQYAALCDVFVMDAFGTAHRAEGSTHGVAKFAKVAAAGPLLAAELDALGKALGNPAKPMAAIVAGSKVSTKLDVLNSLSQICDQLIVGGGIANTFLAAAGHPVGKSLYEPDLLDTARAIAAKVSVPLPVDVVVAKEFAESAAATVKLIADVADDDMILDIGPQTAAQFAELLKSSRTILWNGPVGVFEFDQFGNGTKVLAQAIADSAAFSIAGGGDTLAAIDKYGVAQQISYISTGGGAFLEFVEGKVLPAVEVLEARAKA</sequence>
<dbReference type="EC" id="2.7.2.3" evidence="1"/>
<dbReference type="EMBL" id="CP000076">
    <property type="protein sequence ID" value="AAY94974.1"/>
    <property type="molecule type" value="Genomic_DNA"/>
</dbReference>
<dbReference type="RefSeq" id="WP_011063958.1">
    <property type="nucleotide sequence ID" value="NC_004129.6"/>
</dbReference>
<dbReference type="SMR" id="Q4K4J1"/>
<dbReference type="STRING" id="220664.PFL_5784"/>
<dbReference type="KEGG" id="pfl:PFL_5784"/>
<dbReference type="PATRIC" id="fig|220664.5.peg.5897"/>
<dbReference type="eggNOG" id="COG0126">
    <property type="taxonomic scope" value="Bacteria"/>
</dbReference>
<dbReference type="HOGENOM" id="CLU_025427_0_2_6"/>
<dbReference type="UniPathway" id="UPA00109">
    <property type="reaction ID" value="UER00185"/>
</dbReference>
<dbReference type="Proteomes" id="UP000008540">
    <property type="component" value="Chromosome"/>
</dbReference>
<dbReference type="GO" id="GO:0005829">
    <property type="term" value="C:cytosol"/>
    <property type="evidence" value="ECO:0007669"/>
    <property type="project" value="TreeGrafter"/>
</dbReference>
<dbReference type="GO" id="GO:0043531">
    <property type="term" value="F:ADP binding"/>
    <property type="evidence" value="ECO:0007669"/>
    <property type="project" value="TreeGrafter"/>
</dbReference>
<dbReference type="GO" id="GO:0005524">
    <property type="term" value="F:ATP binding"/>
    <property type="evidence" value="ECO:0007669"/>
    <property type="project" value="UniProtKB-KW"/>
</dbReference>
<dbReference type="GO" id="GO:0004618">
    <property type="term" value="F:phosphoglycerate kinase activity"/>
    <property type="evidence" value="ECO:0007669"/>
    <property type="project" value="UniProtKB-UniRule"/>
</dbReference>
<dbReference type="GO" id="GO:0006094">
    <property type="term" value="P:gluconeogenesis"/>
    <property type="evidence" value="ECO:0007669"/>
    <property type="project" value="TreeGrafter"/>
</dbReference>
<dbReference type="GO" id="GO:0006096">
    <property type="term" value="P:glycolytic process"/>
    <property type="evidence" value="ECO:0007669"/>
    <property type="project" value="UniProtKB-UniRule"/>
</dbReference>
<dbReference type="FunFam" id="3.40.50.1260:FF:000001">
    <property type="entry name" value="Phosphoglycerate kinase"/>
    <property type="match status" value="1"/>
</dbReference>
<dbReference type="FunFam" id="3.40.50.1260:FF:000002">
    <property type="entry name" value="Phosphoglycerate kinase"/>
    <property type="match status" value="1"/>
</dbReference>
<dbReference type="Gene3D" id="3.40.50.1260">
    <property type="entry name" value="Phosphoglycerate kinase, N-terminal domain"/>
    <property type="match status" value="2"/>
</dbReference>
<dbReference type="HAMAP" id="MF_00145">
    <property type="entry name" value="Phosphoglyc_kinase"/>
    <property type="match status" value="1"/>
</dbReference>
<dbReference type="InterPro" id="IPR001576">
    <property type="entry name" value="Phosphoglycerate_kinase"/>
</dbReference>
<dbReference type="InterPro" id="IPR015911">
    <property type="entry name" value="Phosphoglycerate_kinase_CS"/>
</dbReference>
<dbReference type="InterPro" id="IPR015824">
    <property type="entry name" value="Phosphoglycerate_kinase_N"/>
</dbReference>
<dbReference type="InterPro" id="IPR036043">
    <property type="entry name" value="Phosphoglycerate_kinase_sf"/>
</dbReference>
<dbReference type="PANTHER" id="PTHR11406">
    <property type="entry name" value="PHOSPHOGLYCERATE KINASE"/>
    <property type="match status" value="1"/>
</dbReference>
<dbReference type="PANTHER" id="PTHR11406:SF23">
    <property type="entry name" value="PHOSPHOGLYCERATE KINASE 1, CHLOROPLASTIC-RELATED"/>
    <property type="match status" value="1"/>
</dbReference>
<dbReference type="Pfam" id="PF00162">
    <property type="entry name" value="PGK"/>
    <property type="match status" value="1"/>
</dbReference>
<dbReference type="PIRSF" id="PIRSF000724">
    <property type="entry name" value="Pgk"/>
    <property type="match status" value="1"/>
</dbReference>
<dbReference type="PRINTS" id="PR00477">
    <property type="entry name" value="PHGLYCKINASE"/>
</dbReference>
<dbReference type="SUPFAM" id="SSF53748">
    <property type="entry name" value="Phosphoglycerate kinase"/>
    <property type="match status" value="1"/>
</dbReference>
<dbReference type="PROSITE" id="PS00111">
    <property type="entry name" value="PGLYCERATE_KINASE"/>
    <property type="match status" value="1"/>
</dbReference>
<accession>Q4K4J1</accession>